<feature type="initiator methionine" description="Removed" evidence="10 12 13">
    <location>
        <position position="1"/>
    </location>
</feature>
<feature type="chain" id="PRO_0000225615" description="Transcriptional regulator protein Pur-beta">
    <location>
        <begin position="2"/>
        <end position="312"/>
    </location>
</feature>
<feature type="region of interest" description="Disordered" evidence="3">
    <location>
        <begin position="1"/>
        <end position="32"/>
    </location>
</feature>
<feature type="region of interest" description="DNA-binding" evidence="1">
    <location>
        <begin position="28"/>
        <end position="254"/>
    </location>
</feature>
<feature type="region of interest" description="Disordered" evidence="3">
    <location>
        <begin position="284"/>
        <end position="312"/>
    </location>
</feature>
<feature type="compositionally biased region" description="Basic and acidic residues" evidence="3">
    <location>
        <begin position="284"/>
        <end position="295"/>
    </location>
</feature>
<feature type="compositionally biased region" description="Acidic residues" evidence="3">
    <location>
        <begin position="302"/>
        <end position="312"/>
    </location>
</feature>
<feature type="modified residue" description="N-acetylalanine" evidence="10 12 13">
    <location>
        <position position="2"/>
    </location>
</feature>
<feature type="modified residue" description="Phosphoserine" evidence="12 14">
    <location>
        <position position="6"/>
    </location>
</feature>
<feature type="modified residue" description="Phosphoserine" evidence="12 14">
    <location>
        <position position="8"/>
    </location>
</feature>
<feature type="modified residue" description="Omega-N-methylarginine" evidence="1">
    <location>
        <position position="24"/>
    </location>
</feature>
<feature type="modified residue" description="Phosphothreonine" evidence="1">
    <location>
        <position position="31"/>
    </location>
</feature>
<feature type="modified residue" description="Phosphoserine" evidence="9 11 14">
    <location>
        <position position="101"/>
    </location>
</feature>
<feature type="modified residue" description="Omega-N-methylarginine" evidence="1">
    <location>
        <position position="152"/>
    </location>
</feature>
<feature type="modified residue" description="N6-acetyllysine" evidence="1">
    <location>
        <position position="267"/>
    </location>
</feature>
<feature type="modified residue" description="Omega-N-methylarginine" evidence="1">
    <location>
        <position position="294"/>
    </location>
</feature>
<feature type="modified residue" description="Phosphoserine" evidence="11 13">
    <location>
        <position position="298"/>
    </location>
</feature>
<feature type="modified residue" description="Phosphoserine" evidence="7 8 12 13 14">
    <location>
        <position position="304"/>
    </location>
</feature>
<evidence type="ECO:0000250" key="1">
    <source>
        <dbReference type="UniProtKB" id="O35295"/>
    </source>
</evidence>
<evidence type="ECO:0000250" key="2">
    <source>
        <dbReference type="UniProtKB" id="Q68A21"/>
    </source>
</evidence>
<evidence type="ECO:0000256" key="3">
    <source>
        <dbReference type="SAM" id="MobiDB-lite"/>
    </source>
</evidence>
<evidence type="ECO:0000269" key="4">
    <source>
    </source>
</evidence>
<evidence type="ECO:0000269" key="5">
    <source>
    </source>
</evidence>
<evidence type="ECO:0000305" key="6"/>
<evidence type="ECO:0007744" key="7">
    <source>
    </source>
</evidence>
<evidence type="ECO:0007744" key="8">
    <source>
    </source>
</evidence>
<evidence type="ECO:0007744" key="9">
    <source>
    </source>
</evidence>
<evidence type="ECO:0007744" key="10">
    <source>
    </source>
</evidence>
<evidence type="ECO:0007744" key="11">
    <source>
    </source>
</evidence>
<evidence type="ECO:0007744" key="12">
    <source>
    </source>
</evidence>
<evidence type="ECO:0007744" key="13">
    <source>
    </source>
</evidence>
<evidence type="ECO:0007744" key="14">
    <source>
    </source>
</evidence>
<name>PURB_HUMAN</name>
<dbReference type="EMBL" id="AY039216">
    <property type="protein sequence ID" value="AAK72462.1"/>
    <property type="molecule type" value="mRNA"/>
</dbReference>
<dbReference type="EMBL" id="AC004854">
    <property type="protein sequence ID" value="AAS00366.1"/>
    <property type="molecule type" value="Genomic_DNA"/>
</dbReference>
<dbReference type="EMBL" id="CH236960">
    <property type="protein sequence ID" value="EAL23749.1"/>
    <property type="molecule type" value="Genomic_DNA"/>
</dbReference>
<dbReference type="EMBL" id="CH471128">
    <property type="protein sequence ID" value="EAW61073.1"/>
    <property type="molecule type" value="Genomic_DNA"/>
</dbReference>
<dbReference type="EMBL" id="BC101735">
    <property type="protein sequence ID" value="AAI01736.1"/>
    <property type="molecule type" value="mRNA"/>
</dbReference>
<dbReference type="EMBL" id="BC101737">
    <property type="protein sequence ID" value="AAI01738.1"/>
    <property type="molecule type" value="mRNA"/>
</dbReference>
<dbReference type="CCDS" id="CCDS5499.1"/>
<dbReference type="PIR" id="B45036">
    <property type="entry name" value="B45036"/>
</dbReference>
<dbReference type="RefSeq" id="NP_150093.1">
    <property type="nucleotide sequence ID" value="NM_033224.5"/>
</dbReference>
<dbReference type="SMR" id="Q96QR8"/>
<dbReference type="BioGRID" id="111773">
    <property type="interactions" value="342"/>
</dbReference>
<dbReference type="FunCoup" id="Q96QR8">
    <property type="interactions" value="3395"/>
</dbReference>
<dbReference type="IntAct" id="Q96QR8">
    <property type="interactions" value="69"/>
</dbReference>
<dbReference type="MINT" id="Q96QR8"/>
<dbReference type="STRING" id="9606.ENSP00000379051"/>
<dbReference type="GlyGen" id="Q96QR8">
    <property type="glycosylation" value="1 site, 1 O-linked glycan (1 site)"/>
</dbReference>
<dbReference type="iPTMnet" id="Q96QR8"/>
<dbReference type="PhosphoSitePlus" id="Q96QR8"/>
<dbReference type="SwissPalm" id="Q96QR8"/>
<dbReference type="BioMuta" id="PURB"/>
<dbReference type="DMDM" id="74732688"/>
<dbReference type="jPOST" id="Q96QR8"/>
<dbReference type="MassIVE" id="Q96QR8"/>
<dbReference type="PaxDb" id="9606-ENSP00000379051"/>
<dbReference type="PeptideAtlas" id="Q96QR8"/>
<dbReference type="ProteomicsDB" id="77888"/>
<dbReference type="Pumba" id="Q96QR8"/>
<dbReference type="Antibodypedia" id="44598">
    <property type="antibodies" value="95 antibodies from 19 providers"/>
</dbReference>
<dbReference type="DNASU" id="5814"/>
<dbReference type="Ensembl" id="ENST00000395699.5">
    <property type="protein sequence ID" value="ENSP00000379051.2"/>
    <property type="gene ID" value="ENSG00000146676.10"/>
</dbReference>
<dbReference type="GeneID" id="5814"/>
<dbReference type="KEGG" id="hsa:5814"/>
<dbReference type="MANE-Select" id="ENST00000395699.5">
    <property type="protein sequence ID" value="ENSP00000379051.2"/>
    <property type="RefSeq nucleotide sequence ID" value="NM_033224.5"/>
    <property type="RefSeq protein sequence ID" value="NP_150093.1"/>
</dbReference>
<dbReference type="UCSC" id="uc003tme.5">
    <property type="organism name" value="human"/>
</dbReference>
<dbReference type="AGR" id="HGNC:9702"/>
<dbReference type="CTD" id="5814"/>
<dbReference type="DisGeNET" id="5814"/>
<dbReference type="GeneCards" id="PURB"/>
<dbReference type="HGNC" id="HGNC:9702">
    <property type="gene designation" value="PURB"/>
</dbReference>
<dbReference type="HPA" id="ENSG00000146676">
    <property type="expression patterns" value="Low tissue specificity"/>
</dbReference>
<dbReference type="MIM" id="608887">
    <property type="type" value="gene"/>
</dbReference>
<dbReference type="neXtProt" id="NX_Q96QR8"/>
<dbReference type="OpenTargets" id="ENSG00000146676"/>
<dbReference type="PharmGKB" id="PA34046"/>
<dbReference type="VEuPathDB" id="HostDB:ENSG00000146676"/>
<dbReference type="eggNOG" id="KOG3074">
    <property type="taxonomic scope" value="Eukaryota"/>
</dbReference>
<dbReference type="GeneTree" id="ENSGT00950000183162"/>
<dbReference type="HOGENOM" id="CLU_057873_1_1_1"/>
<dbReference type="InParanoid" id="Q96QR8"/>
<dbReference type="OMA" id="AKEDGWS"/>
<dbReference type="OrthoDB" id="523901at2759"/>
<dbReference type="PAN-GO" id="Q96QR8">
    <property type="GO annotations" value="5 GO annotations based on evolutionary models"/>
</dbReference>
<dbReference type="PhylomeDB" id="Q96QR8"/>
<dbReference type="TreeFam" id="TF313701"/>
<dbReference type="PathwayCommons" id="Q96QR8"/>
<dbReference type="SignaLink" id="Q96QR8"/>
<dbReference type="SIGNOR" id="Q96QR8"/>
<dbReference type="BioGRID-ORCS" id="5814">
    <property type="hits" value="14 hits in 1161 CRISPR screens"/>
</dbReference>
<dbReference type="CD-CODE" id="DEE660B4">
    <property type="entry name" value="Stress granule"/>
</dbReference>
<dbReference type="CD-CODE" id="FB4E32DD">
    <property type="entry name" value="Presynaptic clusters and postsynaptic densities"/>
</dbReference>
<dbReference type="ChiTaRS" id="PURB">
    <property type="organism name" value="human"/>
</dbReference>
<dbReference type="GeneWiki" id="PURB"/>
<dbReference type="GenomeRNAi" id="5814"/>
<dbReference type="Pharos" id="Q96QR8">
    <property type="development level" value="Tbio"/>
</dbReference>
<dbReference type="PRO" id="PR:Q96QR8"/>
<dbReference type="Proteomes" id="UP000005640">
    <property type="component" value="Chromosome 7"/>
</dbReference>
<dbReference type="RNAct" id="Q96QR8">
    <property type="molecule type" value="protein"/>
</dbReference>
<dbReference type="Bgee" id="ENSG00000146676">
    <property type="expression patterns" value="Expressed in upper arm skin and 195 other cell types or tissues"/>
</dbReference>
<dbReference type="GO" id="GO:0005654">
    <property type="term" value="C:nucleoplasm"/>
    <property type="evidence" value="ECO:0000314"/>
    <property type="project" value="HPA"/>
</dbReference>
<dbReference type="GO" id="GO:0005634">
    <property type="term" value="C:nucleus"/>
    <property type="evidence" value="ECO:0000250"/>
    <property type="project" value="BHF-UCL"/>
</dbReference>
<dbReference type="GO" id="GO:0000981">
    <property type="term" value="F:DNA-binding transcription factor activity, RNA polymerase II-specific"/>
    <property type="evidence" value="ECO:0000318"/>
    <property type="project" value="GO_Central"/>
</dbReference>
<dbReference type="GO" id="GO:0140297">
    <property type="term" value="F:DNA-binding transcription factor binding"/>
    <property type="evidence" value="ECO:0000250"/>
    <property type="project" value="UniProtKB"/>
</dbReference>
<dbReference type="GO" id="GO:0001227">
    <property type="term" value="F:DNA-binding transcription repressor activity, RNA polymerase II-specific"/>
    <property type="evidence" value="ECO:0000250"/>
    <property type="project" value="UniProtKB"/>
</dbReference>
<dbReference type="GO" id="GO:0003729">
    <property type="term" value="F:mRNA binding"/>
    <property type="evidence" value="ECO:0000250"/>
    <property type="project" value="UniProtKB"/>
</dbReference>
<dbReference type="GO" id="GO:0000900">
    <property type="term" value="F:mRNA regulatory element binding translation repressor activity"/>
    <property type="evidence" value="ECO:0000250"/>
    <property type="project" value="BHF-UCL"/>
</dbReference>
<dbReference type="GO" id="GO:0032422">
    <property type="term" value="F:purine-rich negative regulatory element binding"/>
    <property type="evidence" value="ECO:0000250"/>
    <property type="project" value="BHF-UCL"/>
</dbReference>
<dbReference type="GO" id="GO:0003723">
    <property type="term" value="F:RNA binding"/>
    <property type="evidence" value="ECO:0007005"/>
    <property type="project" value="UniProtKB"/>
</dbReference>
<dbReference type="GO" id="GO:0000977">
    <property type="term" value="F:RNA polymerase II transcription regulatory region sequence-specific DNA binding"/>
    <property type="evidence" value="ECO:0000318"/>
    <property type="project" value="GO_Central"/>
</dbReference>
<dbReference type="GO" id="GO:0003697">
    <property type="term" value="F:single-stranded DNA binding"/>
    <property type="evidence" value="ECO:0000250"/>
    <property type="project" value="UniProtKB"/>
</dbReference>
<dbReference type="GO" id="GO:0046332">
    <property type="term" value="F:SMAD binding"/>
    <property type="evidence" value="ECO:0007669"/>
    <property type="project" value="Ensembl"/>
</dbReference>
<dbReference type="GO" id="GO:0000122">
    <property type="term" value="P:negative regulation of transcription by RNA polymerase II"/>
    <property type="evidence" value="ECO:0000250"/>
    <property type="project" value="BHF-UCL"/>
</dbReference>
<dbReference type="GO" id="GO:0045944">
    <property type="term" value="P:positive regulation of transcription by RNA polymerase II"/>
    <property type="evidence" value="ECO:0000250"/>
    <property type="project" value="UniProtKB"/>
</dbReference>
<dbReference type="GO" id="GO:0045637">
    <property type="term" value="P:regulation of myeloid cell differentiation"/>
    <property type="evidence" value="ECO:0000303"/>
    <property type="project" value="UniProtKB"/>
</dbReference>
<dbReference type="GO" id="GO:0006357">
    <property type="term" value="P:regulation of transcription by RNA polymerase II"/>
    <property type="evidence" value="ECO:0000318"/>
    <property type="project" value="GO_Central"/>
</dbReference>
<dbReference type="FunFam" id="3.10.450.700:FF:000001">
    <property type="entry name" value="Purine-rich element binding protein A"/>
    <property type="match status" value="1"/>
</dbReference>
<dbReference type="FunFam" id="3.30.2450.30:FF:000001">
    <property type="entry name" value="Purine-rich element binding protein A"/>
    <property type="match status" value="1"/>
</dbReference>
<dbReference type="Gene3D" id="3.10.450.700">
    <property type="match status" value="1"/>
</dbReference>
<dbReference type="Gene3D" id="3.30.2450.30">
    <property type="match status" value="1"/>
</dbReference>
<dbReference type="InterPro" id="IPR006628">
    <property type="entry name" value="PUR-bd_fam"/>
</dbReference>
<dbReference type="PANTHER" id="PTHR12611">
    <property type="entry name" value="PUR-TRANSCRIPTIONAL ACTIVATOR"/>
    <property type="match status" value="1"/>
</dbReference>
<dbReference type="PANTHER" id="PTHR12611:SF4">
    <property type="entry name" value="TRANSCRIPTIONAL ACTIVATOR PROTEIN PUR-BETA"/>
    <property type="match status" value="1"/>
</dbReference>
<dbReference type="Pfam" id="PF04845">
    <property type="entry name" value="PurA"/>
    <property type="match status" value="1"/>
</dbReference>
<dbReference type="SMART" id="SM00712">
    <property type="entry name" value="PUR"/>
    <property type="match status" value="3"/>
</dbReference>
<gene>
    <name type="primary">PURB</name>
</gene>
<sequence>MADGDSGSERGGGGGPCGFQPASRGGGEQETQELASKRLDIQNKRFYLDVKQNAKGRFLKIAEVGAGGSKSRLTLSMAVAAEFRDSLGDFIEHYAQLGPSSPEQLAAGAEEGGGPRRALKSEFLVRENRKYYLDLKENQRGRFLRIRQTVNRGGGGFGAGPGPGGLQSGQTIALPAQGLIEFRDALAKLIDDYGGEDDELAGGPGGGAGGPGGGLYGELPEGTSITVDSKRFFFDVGCNKYGVFLRVSEVKPSYRNAITVPFKAWGKFGGAFCRYADEMKEIQERQRDKLYERRGGGSGGGEESEGEEVDED</sequence>
<keyword id="KW-0007">Acetylation</keyword>
<keyword id="KW-0010">Activator</keyword>
<keyword id="KW-0238">DNA-binding</keyword>
<keyword id="KW-0488">Methylation</keyword>
<keyword id="KW-0539">Nucleus</keyword>
<keyword id="KW-0597">Phosphoprotein</keyword>
<keyword id="KW-1267">Proteomics identification</keyword>
<keyword id="KW-1185">Reference proteome</keyword>
<keyword id="KW-0678">Repressor</keyword>
<keyword id="KW-0804">Transcription</keyword>
<keyword id="KW-0805">Transcription regulation</keyword>
<comment type="function">
    <text evidence="1 2 5">Transcriptional regulator which can act as an activator or a repressor. Represses the transcription of ACTA2 in fibroblasts and smooth muscle cells via its ability to interact with the purine-rich strand of a MCAT- containing element in the 5' flanking region of the gene. Represses the transcription of MYOCD, capable of repressing all isoforms of MYOCD but the magnitude of the repressive effects is most notable for the SMC- specific isoforms. Promotes hepatic glucose production by activating the transcription of ADCY6, leading to cAMP accumulation, increased PKA activity, CREB activation, and increased transcription of PCK1 and G6PC genes (By similarity). Has capacity to bind repeated elements in single-stranded DNA such as the purine-rich single strand of the PUR element located upstream of the MYC gene (PubMed:1448097). Participates in transcriptional and translational regulation of alpha-MHC expression in cardiac myocytes by binding to the purine-rich negative regulatory (PNR) element Modulates constitutive liver galectin-3 gene transcription by binding to its promoter. May play a role in the dendritic transport of a subset of mRNAs (By similarity).</text>
</comment>
<comment type="subunit">
    <text evidence="1">Homodimer, heterodimer with PURA and heterotrimer with PURA and YBX1/Y-box protein 1. Interacts with MYOCD and SRF.</text>
</comment>
<comment type="interaction">
    <interactant intactId="EBI-2880222">
        <id>Q96QR8</id>
    </interactant>
    <interactant intactId="EBI-541426">
        <id>Q9BXS5</id>
        <label>AP1M1</label>
    </interactant>
    <organismsDiffer>false</organismsDiffer>
    <experiments>3</experiments>
</comment>
<comment type="interaction">
    <interactant intactId="EBI-2880222">
        <id>Q96QR8</id>
    </interactant>
    <interactant intactId="EBI-739832">
        <id>Q8TBB1</id>
        <label>LNX1</label>
    </interactant>
    <organismsDiffer>false</organismsDiffer>
    <experiments>3</experiments>
</comment>
<comment type="interaction">
    <interactant intactId="EBI-2880222">
        <id>Q96QR8</id>
    </interactant>
    <interactant intactId="EBI-923391">
        <id>Q9UBB5</id>
        <label>MBD2</label>
    </interactant>
    <organismsDiffer>false</organismsDiffer>
    <experiments>3</experiments>
</comment>
<comment type="interaction">
    <interactant intactId="EBI-2880222">
        <id>Q96QR8</id>
    </interactant>
    <interactant intactId="EBI-2889252">
        <id>Q96AH0</id>
        <label>NABP1</label>
    </interactant>
    <organismsDiffer>false</organismsDiffer>
    <experiments>3</experiments>
</comment>
<comment type="interaction">
    <interactant intactId="EBI-2880222">
        <id>Q96QR8</id>
    </interactant>
    <interactant intactId="EBI-10329013">
        <id>Q9Y5E9</id>
        <label>PCDHB14</label>
    </interactant>
    <organismsDiffer>false</organismsDiffer>
    <experiments>3</experiments>
</comment>
<comment type="interaction">
    <interactant intactId="EBI-2880222">
        <id>Q96QR8</id>
    </interactant>
    <interactant intactId="EBI-10486136">
        <id>Q6ZNH5</id>
        <label>ZNF497</label>
    </interactant>
    <organismsDiffer>false</organismsDiffer>
    <experiments>3</experiments>
</comment>
<comment type="subcellular location">
    <subcellularLocation>
        <location evidence="5">Nucleus</location>
    </subcellularLocation>
</comment>
<comment type="tissue specificity">
    <text evidence="4">Expressed in myocardium of heart failure patients.</text>
</comment>
<comment type="miscellaneous">
    <text>Defects in PURB may be a cause of progression of myelodysplastic syndrome (MDS) towards acute myelogenous leukemia (AML). MDS refers to a heterogeneous group of closely related hematopoietic disorders. All are characterized by a cellular marrow with impaired morphology and maturation (dysmyelopoiesis) and peripheral blood cytopenias, resulting from ineffective blood cell production. Some patients with MDS develop acute myelogenous leukemia (AML), a malignant disease in which hematopoietic precursors are arrested in an early stage of development.</text>
</comment>
<comment type="similarity">
    <text evidence="6">Belongs to the PUR DNA-binding protein family.</text>
</comment>
<reference key="1">
    <citation type="journal article" date="1992" name="Mol. Cell. Biol.">
        <title>Sequence of cDNA comprising the human pur gene and sequence-specific single-stranded-DNA-binding properties of the encoded protein.</title>
        <authorList>
            <person name="Bergemann A.D."/>
            <person name="Ma Z.-W."/>
            <person name="Johnson E.M."/>
        </authorList>
    </citation>
    <scope>NUCLEOTIDE SEQUENCE [MRNA]</scope>
    <scope>SUBCELLULAR LOCATION</scope>
    <scope>FUNCTION</scope>
</reference>
<reference key="2">
    <citation type="journal article" date="2003" name="Science">
        <title>Human chromosome 7: DNA sequence and biology.</title>
        <authorList>
            <person name="Scherer S.W."/>
            <person name="Cheung J."/>
            <person name="MacDonald J.R."/>
            <person name="Osborne L.R."/>
            <person name="Nakabayashi K."/>
            <person name="Herbrick J.-A."/>
            <person name="Carson A.R."/>
            <person name="Parker-Katiraee L."/>
            <person name="Skaug J."/>
            <person name="Khaja R."/>
            <person name="Zhang J."/>
            <person name="Hudek A.K."/>
            <person name="Li M."/>
            <person name="Haddad M."/>
            <person name="Duggan G.E."/>
            <person name="Fernandez B.A."/>
            <person name="Kanematsu E."/>
            <person name="Gentles S."/>
            <person name="Christopoulos C.C."/>
            <person name="Choufani S."/>
            <person name="Kwasnicka D."/>
            <person name="Zheng X.H."/>
            <person name="Lai Z."/>
            <person name="Nusskern D.R."/>
            <person name="Zhang Q."/>
            <person name="Gu Z."/>
            <person name="Lu F."/>
            <person name="Zeesman S."/>
            <person name="Nowaczyk M.J."/>
            <person name="Teshima I."/>
            <person name="Chitayat D."/>
            <person name="Shuman C."/>
            <person name="Weksberg R."/>
            <person name="Zackai E.H."/>
            <person name="Grebe T.A."/>
            <person name="Cox S.R."/>
            <person name="Kirkpatrick S.J."/>
            <person name="Rahman N."/>
            <person name="Friedman J.M."/>
            <person name="Heng H.H.Q."/>
            <person name="Pelicci P.G."/>
            <person name="Lo-Coco F."/>
            <person name="Belloni E."/>
            <person name="Shaffer L.G."/>
            <person name="Pober B."/>
            <person name="Morton C.C."/>
            <person name="Gusella J.F."/>
            <person name="Bruns G.A.P."/>
            <person name="Korf B.R."/>
            <person name="Quade B.J."/>
            <person name="Ligon A.H."/>
            <person name="Ferguson H."/>
            <person name="Higgins A.W."/>
            <person name="Leach N.T."/>
            <person name="Herrick S.R."/>
            <person name="Lemyre E."/>
            <person name="Farra C.G."/>
            <person name="Kim H.-G."/>
            <person name="Summers A.M."/>
            <person name="Gripp K.W."/>
            <person name="Roberts W."/>
            <person name="Szatmari P."/>
            <person name="Winsor E.J.T."/>
            <person name="Grzeschik K.-H."/>
            <person name="Teebi A."/>
            <person name="Minassian B.A."/>
            <person name="Kere J."/>
            <person name="Armengol L."/>
            <person name="Pujana M.A."/>
            <person name="Estivill X."/>
            <person name="Wilson M.D."/>
            <person name="Koop B.F."/>
            <person name="Tosi S."/>
            <person name="Moore G.E."/>
            <person name="Boright A.P."/>
            <person name="Zlotorynski E."/>
            <person name="Kerem B."/>
            <person name="Kroisel P.M."/>
            <person name="Petek E."/>
            <person name="Oscier D.G."/>
            <person name="Mould S.J."/>
            <person name="Doehner H."/>
            <person name="Doehner K."/>
            <person name="Rommens J.M."/>
            <person name="Vincent J.B."/>
            <person name="Venter J.C."/>
            <person name="Li P.W."/>
            <person name="Mural R.J."/>
            <person name="Adams M.D."/>
            <person name="Tsui L.-C."/>
        </authorList>
    </citation>
    <scope>NUCLEOTIDE SEQUENCE [LARGE SCALE GENOMIC DNA]</scope>
</reference>
<reference key="3">
    <citation type="submission" date="2005-09" db="EMBL/GenBank/DDBJ databases">
        <authorList>
            <person name="Mural R.J."/>
            <person name="Istrail S."/>
            <person name="Sutton G.G."/>
            <person name="Florea L."/>
            <person name="Halpern A.L."/>
            <person name="Mobarry C.M."/>
            <person name="Lippert R."/>
            <person name="Walenz B."/>
            <person name="Shatkay H."/>
            <person name="Dew I."/>
            <person name="Miller J.R."/>
            <person name="Flanigan M.J."/>
            <person name="Edwards N.J."/>
            <person name="Bolanos R."/>
            <person name="Fasulo D."/>
            <person name="Halldorsson B.V."/>
            <person name="Hannenhalli S."/>
            <person name="Turner R."/>
            <person name="Yooseph S."/>
            <person name="Lu F."/>
            <person name="Nusskern D.R."/>
            <person name="Shue B.C."/>
            <person name="Zheng X.H."/>
            <person name="Zhong F."/>
            <person name="Delcher A.L."/>
            <person name="Huson D.H."/>
            <person name="Kravitz S.A."/>
            <person name="Mouchard L."/>
            <person name="Reinert K."/>
            <person name="Remington K.A."/>
            <person name="Clark A.G."/>
            <person name="Waterman M.S."/>
            <person name="Eichler E.E."/>
            <person name="Adams M.D."/>
            <person name="Hunkapiller M.W."/>
            <person name="Myers E.W."/>
            <person name="Venter J.C."/>
        </authorList>
    </citation>
    <scope>NUCLEOTIDE SEQUENCE [LARGE SCALE GENOMIC DNA]</scope>
</reference>
<reference key="4">
    <citation type="journal article" date="2003" name="Nature">
        <title>The DNA sequence of human chromosome 7.</title>
        <authorList>
            <person name="Hillier L.W."/>
            <person name="Fulton R.S."/>
            <person name="Fulton L.A."/>
            <person name="Graves T.A."/>
            <person name="Pepin K.H."/>
            <person name="Wagner-McPherson C."/>
            <person name="Layman D."/>
            <person name="Maas J."/>
            <person name="Jaeger S."/>
            <person name="Walker R."/>
            <person name="Wylie K."/>
            <person name="Sekhon M."/>
            <person name="Becker M.C."/>
            <person name="O'Laughlin M.D."/>
            <person name="Schaller M.E."/>
            <person name="Fewell G.A."/>
            <person name="Delehaunty K.D."/>
            <person name="Miner T.L."/>
            <person name="Nash W.E."/>
            <person name="Cordes M."/>
            <person name="Du H."/>
            <person name="Sun H."/>
            <person name="Edwards J."/>
            <person name="Bradshaw-Cordum H."/>
            <person name="Ali J."/>
            <person name="Andrews S."/>
            <person name="Isak A."/>
            <person name="Vanbrunt A."/>
            <person name="Nguyen C."/>
            <person name="Du F."/>
            <person name="Lamar B."/>
            <person name="Courtney L."/>
            <person name="Kalicki J."/>
            <person name="Ozersky P."/>
            <person name="Bielicki L."/>
            <person name="Scott K."/>
            <person name="Holmes A."/>
            <person name="Harkins R."/>
            <person name="Harris A."/>
            <person name="Strong C.M."/>
            <person name="Hou S."/>
            <person name="Tomlinson C."/>
            <person name="Dauphin-Kohlberg S."/>
            <person name="Kozlowicz-Reilly A."/>
            <person name="Leonard S."/>
            <person name="Rohlfing T."/>
            <person name="Rock S.M."/>
            <person name="Tin-Wollam A.-M."/>
            <person name="Abbott A."/>
            <person name="Minx P."/>
            <person name="Maupin R."/>
            <person name="Strowmatt C."/>
            <person name="Latreille P."/>
            <person name="Miller N."/>
            <person name="Johnson D."/>
            <person name="Murray J."/>
            <person name="Woessner J.P."/>
            <person name="Wendl M.C."/>
            <person name="Yang S.-P."/>
            <person name="Schultz B.R."/>
            <person name="Wallis J.W."/>
            <person name="Spieth J."/>
            <person name="Bieri T.A."/>
            <person name="Nelson J.O."/>
            <person name="Berkowicz N."/>
            <person name="Wohldmann P.E."/>
            <person name="Cook L.L."/>
            <person name="Hickenbotham M.T."/>
            <person name="Eldred J."/>
            <person name="Williams D."/>
            <person name="Bedell J.A."/>
            <person name="Mardis E.R."/>
            <person name="Clifton S.W."/>
            <person name="Chissoe S.L."/>
            <person name="Marra M.A."/>
            <person name="Raymond C."/>
            <person name="Haugen E."/>
            <person name="Gillett W."/>
            <person name="Zhou Y."/>
            <person name="James R."/>
            <person name="Phelps K."/>
            <person name="Iadanoto S."/>
            <person name="Bubb K."/>
            <person name="Simms E."/>
            <person name="Levy R."/>
            <person name="Clendenning J."/>
            <person name="Kaul R."/>
            <person name="Kent W.J."/>
            <person name="Furey T.S."/>
            <person name="Baertsch R.A."/>
            <person name="Brent M.R."/>
            <person name="Keibler E."/>
            <person name="Flicek P."/>
            <person name="Bork P."/>
            <person name="Suyama M."/>
            <person name="Bailey J.A."/>
            <person name="Portnoy M.E."/>
            <person name="Torrents D."/>
            <person name="Chinwalla A.T."/>
            <person name="Gish W.R."/>
            <person name="Eddy S.R."/>
            <person name="McPherson J.D."/>
            <person name="Olson M.V."/>
            <person name="Eichler E.E."/>
            <person name="Green E.D."/>
            <person name="Waterston R.H."/>
            <person name="Wilson R.K."/>
        </authorList>
    </citation>
    <scope>NUCLEOTIDE SEQUENCE [LARGE SCALE GENOMIC DNA]</scope>
</reference>
<reference key="5">
    <citation type="journal article" date="2004" name="Genome Res.">
        <title>The status, quality, and expansion of the NIH full-length cDNA project: the Mammalian Gene Collection (MGC).</title>
        <authorList>
            <consortium name="The MGC Project Team"/>
        </authorList>
    </citation>
    <scope>NUCLEOTIDE SEQUENCE [LARGE SCALE MRNA]</scope>
    <source>
        <tissue>Lung</tissue>
    </source>
</reference>
<reference key="6">
    <citation type="journal article" date="2001" name="Leukemia">
        <title>Deletions of PURA, at 5q31, and PURB, at 7p13, in myelodysplastic syndrome and progression to acute myelogenous leukemia.</title>
        <authorList>
            <person name="Lezon-Geyda K."/>
            <person name="Najfeld V."/>
            <person name="Johnson E.M."/>
        </authorList>
    </citation>
    <scope>INVOLVEMENT IN MDS</scope>
</reference>
<reference key="7">
    <citation type="journal article" date="2003" name="J. Biol. Chem.">
        <title>Single-stranded DNA-binding proteins PURalpha and PURbeta bind to a purine-rich negative regulatory element of the alpha-myosin heavy chain gene and control transcriptional and translational regulation of the gene expression. Implications in the repression of alpha-myosin heavy chain during heart failure.</title>
        <authorList>
            <person name="Gupta M."/>
            <person name="Sueblinvong V."/>
            <person name="Raman J."/>
            <person name="Jeevanandam V."/>
            <person name="Gupta M.P."/>
        </authorList>
    </citation>
    <scope>TISSUE SPECIFICITY</scope>
</reference>
<reference key="8">
    <citation type="journal article" date="2006" name="Cell">
        <title>Global, in vivo, and site-specific phosphorylation dynamics in signaling networks.</title>
        <authorList>
            <person name="Olsen J.V."/>
            <person name="Blagoev B."/>
            <person name="Gnad F."/>
            <person name="Macek B."/>
            <person name="Kumar C."/>
            <person name="Mortensen P."/>
            <person name="Mann M."/>
        </authorList>
    </citation>
    <scope>PHOSPHORYLATION [LARGE SCALE ANALYSIS] AT SER-304</scope>
    <scope>IDENTIFICATION BY MASS SPECTROMETRY [LARGE SCALE ANALYSIS]</scope>
    <source>
        <tissue>Cervix carcinoma</tissue>
    </source>
</reference>
<reference key="9">
    <citation type="journal article" date="2008" name="J. Proteome Res.">
        <title>Combining protein-based IMAC, peptide-based IMAC, and MudPIT for efficient phosphoproteomic analysis.</title>
        <authorList>
            <person name="Cantin G.T."/>
            <person name="Yi W."/>
            <person name="Lu B."/>
            <person name="Park S.K."/>
            <person name="Xu T."/>
            <person name="Lee J.-D."/>
            <person name="Yates J.R. III"/>
        </authorList>
    </citation>
    <scope>IDENTIFICATION BY MASS SPECTROMETRY [LARGE SCALE ANALYSIS]</scope>
    <source>
        <tissue>Cervix carcinoma</tissue>
    </source>
</reference>
<reference key="10">
    <citation type="journal article" date="2008" name="Proc. Natl. Acad. Sci. U.S.A.">
        <title>A quantitative atlas of mitotic phosphorylation.</title>
        <authorList>
            <person name="Dephoure N."/>
            <person name="Zhou C."/>
            <person name="Villen J."/>
            <person name="Beausoleil S.A."/>
            <person name="Bakalarski C.E."/>
            <person name="Elledge S.J."/>
            <person name="Gygi S.P."/>
        </authorList>
    </citation>
    <scope>PHOSPHORYLATION [LARGE SCALE ANALYSIS] AT SER-101</scope>
    <scope>IDENTIFICATION BY MASS SPECTROMETRY [LARGE SCALE ANALYSIS]</scope>
    <source>
        <tissue>Cervix carcinoma</tissue>
    </source>
</reference>
<reference key="11">
    <citation type="journal article" date="2008" name="Proteomics">
        <title>Large-scale phosphoproteome analysis of human liver tissue by enrichment and fractionation of phosphopeptides with strong anion exchange chromatography.</title>
        <authorList>
            <person name="Han G."/>
            <person name="Ye M."/>
            <person name="Zhou H."/>
            <person name="Jiang X."/>
            <person name="Feng S."/>
            <person name="Jiang X."/>
            <person name="Tian R."/>
            <person name="Wan D."/>
            <person name="Zou H."/>
            <person name="Gu J."/>
        </authorList>
    </citation>
    <scope>PHOSPHORYLATION [LARGE SCALE ANALYSIS] AT SER-304</scope>
    <scope>IDENTIFICATION BY MASS SPECTROMETRY [LARGE SCALE ANALYSIS]</scope>
    <source>
        <tissue>Liver</tissue>
    </source>
</reference>
<reference key="12">
    <citation type="journal article" date="2009" name="Anal. Chem.">
        <title>Lys-N and trypsin cover complementary parts of the phosphoproteome in a refined SCX-based approach.</title>
        <authorList>
            <person name="Gauci S."/>
            <person name="Helbig A.O."/>
            <person name="Slijper M."/>
            <person name="Krijgsveld J."/>
            <person name="Heck A.J."/>
            <person name="Mohammed S."/>
        </authorList>
    </citation>
    <scope>ACETYLATION [LARGE SCALE ANALYSIS] AT ALA-2</scope>
    <scope>CLEAVAGE OF INITIATOR METHIONINE [LARGE SCALE ANALYSIS]</scope>
    <scope>IDENTIFICATION BY MASS SPECTROMETRY [LARGE SCALE ANALYSIS]</scope>
</reference>
<reference key="13">
    <citation type="journal article" date="2009" name="Sci. Signal.">
        <title>Quantitative phosphoproteomic analysis of T cell receptor signaling reveals system-wide modulation of protein-protein interactions.</title>
        <authorList>
            <person name="Mayya V."/>
            <person name="Lundgren D.H."/>
            <person name="Hwang S.-I."/>
            <person name="Rezaul K."/>
            <person name="Wu L."/>
            <person name="Eng J.K."/>
            <person name="Rodionov V."/>
            <person name="Han D.K."/>
        </authorList>
    </citation>
    <scope>PHOSPHORYLATION [LARGE SCALE ANALYSIS] AT SER-101 AND SER-298</scope>
    <scope>IDENTIFICATION BY MASS SPECTROMETRY [LARGE SCALE ANALYSIS]</scope>
    <source>
        <tissue>Leukemic T-cell</tissue>
    </source>
</reference>
<reference key="14">
    <citation type="journal article" date="2010" name="Sci. Signal.">
        <title>Quantitative phosphoproteomics reveals widespread full phosphorylation site occupancy during mitosis.</title>
        <authorList>
            <person name="Olsen J.V."/>
            <person name="Vermeulen M."/>
            <person name="Santamaria A."/>
            <person name="Kumar C."/>
            <person name="Miller M.L."/>
            <person name="Jensen L.J."/>
            <person name="Gnad F."/>
            <person name="Cox J."/>
            <person name="Jensen T.S."/>
            <person name="Nigg E.A."/>
            <person name="Brunak S."/>
            <person name="Mann M."/>
        </authorList>
    </citation>
    <scope>ACETYLATION [LARGE SCALE ANALYSIS] AT ALA-2</scope>
    <scope>PHOSPHORYLATION [LARGE SCALE ANALYSIS] AT SER-6; SER-8 AND SER-304</scope>
    <scope>CLEAVAGE OF INITIATOR METHIONINE [LARGE SCALE ANALYSIS]</scope>
    <scope>IDENTIFICATION BY MASS SPECTROMETRY [LARGE SCALE ANALYSIS]</scope>
    <source>
        <tissue>Cervix carcinoma</tissue>
    </source>
</reference>
<reference key="15">
    <citation type="journal article" date="2011" name="BMC Syst. Biol.">
        <title>Initial characterization of the human central proteome.</title>
        <authorList>
            <person name="Burkard T.R."/>
            <person name="Planyavsky M."/>
            <person name="Kaupe I."/>
            <person name="Breitwieser F.P."/>
            <person name="Buerckstuemmer T."/>
            <person name="Bennett K.L."/>
            <person name="Superti-Furga G."/>
            <person name="Colinge J."/>
        </authorList>
    </citation>
    <scope>IDENTIFICATION BY MASS SPECTROMETRY [LARGE SCALE ANALYSIS]</scope>
</reference>
<reference key="16">
    <citation type="journal article" date="2011" name="Sci. Signal.">
        <title>System-wide temporal characterization of the proteome and phosphoproteome of human embryonic stem cell differentiation.</title>
        <authorList>
            <person name="Rigbolt K.T."/>
            <person name="Prokhorova T.A."/>
            <person name="Akimov V."/>
            <person name="Henningsen J."/>
            <person name="Johansen P.T."/>
            <person name="Kratchmarova I."/>
            <person name="Kassem M."/>
            <person name="Mann M."/>
            <person name="Olsen J.V."/>
            <person name="Blagoev B."/>
        </authorList>
    </citation>
    <scope>ACETYLATION [LARGE SCALE ANALYSIS] AT ALA-2</scope>
    <scope>PHOSPHORYLATION [LARGE SCALE ANALYSIS] AT SER-298 AND SER-304</scope>
    <scope>CLEAVAGE OF INITIATOR METHIONINE [LARGE SCALE ANALYSIS]</scope>
    <scope>IDENTIFICATION BY MASS SPECTROMETRY [LARGE SCALE ANALYSIS]</scope>
</reference>
<reference key="17">
    <citation type="journal article" date="2013" name="J. Proteome Res.">
        <title>Toward a comprehensive characterization of a human cancer cell phosphoproteome.</title>
        <authorList>
            <person name="Zhou H."/>
            <person name="Di Palma S."/>
            <person name="Preisinger C."/>
            <person name="Peng M."/>
            <person name="Polat A.N."/>
            <person name="Heck A.J."/>
            <person name="Mohammed S."/>
        </authorList>
    </citation>
    <scope>PHOSPHORYLATION [LARGE SCALE ANALYSIS] AT SER-6; SER-8; SER-101 AND SER-304</scope>
    <scope>IDENTIFICATION BY MASS SPECTROMETRY [LARGE SCALE ANALYSIS]</scope>
    <source>
        <tissue>Cervix carcinoma</tissue>
        <tissue>Erythroleukemia</tissue>
    </source>
</reference>
<reference key="18">
    <citation type="journal article" date="2014" name="J. Proteomics">
        <title>An enzyme assisted RP-RPLC approach for in-depth analysis of human liver phosphoproteome.</title>
        <authorList>
            <person name="Bian Y."/>
            <person name="Song C."/>
            <person name="Cheng K."/>
            <person name="Dong M."/>
            <person name="Wang F."/>
            <person name="Huang J."/>
            <person name="Sun D."/>
            <person name="Wang L."/>
            <person name="Ye M."/>
            <person name="Zou H."/>
        </authorList>
    </citation>
    <scope>IDENTIFICATION BY MASS SPECTROMETRY [LARGE SCALE ANALYSIS]</scope>
    <source>
        <tissue>Liver</tissue>
    </source>
</reference>
<proteinExistence type="evidence at protein level"/>
<organism>
    <name type="scientific">Homo sapiens</name>
    <name type="common">Human</name>
    <dbReference type="NCBI Taxonomy" id="9606"/>
    <lineage>
        <taxon>Eukaryota</taxon>
        <taxon>Metazoa</taxon>
        <taxon>Chordata</taxon>
        <taxon>Craniata</taxon>
        <taxon>Vertebrata</taxon>
        <taxon>Euteleostomi</taxon>
        <taxon>Mammalia</taxon>
        <taxon>Eutheria</taxon>
        <taxon>Euarchontoglires</taxon>
        <taxon>Primates</taxon>
        <taxon>Haplorrhini</taxon>
        <taxon>Catarrhini</taxon>
        <taxon>Hominidae</taxon>
        <taxon>Homo</taxon>
    </lineage>
</organism>
<accession>Q96QR8</accession>
<accession>A4D2L7</accession>
<protein>
    <recommendedName>
        <fullName>Transcriptional regulator protein Pur-beta</fullName>
    </recommendedName>
    <alternativeName>
        <fullName>Purine-rich element-binding protein B</fullName>
    </alternativeName>
</protein>